<dbReference type="EMBL" id="M57501">
    <property type="protein sequence ID" value="AAA63458.1"/>
    <property type="molecule type" value="Genomic_DNA"/>
</dbReference>
<dbReference type="EMBL" id="AF034764">
    <property type="protein sequence ID" value="AAC63946.1"/>
    <property type="molecule type" value="Genomic_DNA"/>
</dbReference>
<dbReference type="EMBL" id="U76543">
    <property type="protein sequence ID" value="AAB66595.1"/>
    <property type="molecule type" value="Genomic_DNA"/>
</dbReference>
<dbReference type="EMBL" id="AF003905">
    <property type="protein sequence ID" value="AAB66597.1"/>
    <property type="molecule type" value="Genomic_DNA"/>
</dbReference>
<dbReference type="PIR" id="A37853">
    <property type="entry name" value="A37853"/>
</dbReference>
<dbReference type="RefSeq" id="WP_003120600.1">
    <property type="nucleotide sequence ID" value="NZ_WUDO01000010.1"/>
</dbReference>
<dbReference type="SMR" id="P21184"/>
<dbReference type="DIP" id="DIP-61729N"/>
<dbReference type="IntAct" id="P21184">
    <property type="interactions" value="2"/>
</dbReference>
<dbReference type="eggNOG" id="COG1344">
    <property type="taxonomic scope" value="Bacteria"/>
</dbReference>
<dbReference type="GO" id="GO:0009288">
    <property type="term" value="C:bacterial-type flagellum"/>
    <property type="evidence" value="ECO:0007669"/>
    <property type="project" value="UniProtKB-SubCell"/>
</dbReference>
<dbReference type="GO" id="GO:0005576">
    <property type="term" value="C:extracellular region"/>
    <property type="evidence" value="ECO:0007669"/>
    <property type="project" value="UniProtKB-SubCell"/>
</dbReference>
<dbReference type="GO" id="GO:0005198">
    <property type="term" value="F:structural molecule activity"/>
    <property type="evidence" value="ECO:0007669"/>
    <property type="project" value="InterPro"/>
</dbReference>
<dbReference type="Gene3D" id="2.60.40.4390">
    <property type="match status" value="1"/>
</dbReference>
<dbReference type="Gene3D" id="6.10.280.190">
    <property type="match status" value="1"/>
</dbReference>
<dbReference type="Gene3D" id="1.20.1330.10">
    <property type="entry name" value="f41 fragment of flagellin, N-terminal domain"/>
    <property type="match status" value="1"/>
</dbReference>
<dbReference type="Gene3D" id="6.10.10.10">
    <property type="entry name" value="Flagellar export chaperone, C-terminal domain"/>
    <property type="match status" value="1"/>
</dbReference>
<dbReference type="InterPro" id="IPR001492">
    <property type="entry name" value="Flagellin"/>
</dbReference>
<dbReference type="InterPro" id="IPR046358">
    <property type="entry name" value="Flagellin_C"/>
</dbReference>
<dbReference type="InterPro" id="IPR042187">
    <property type="entry name" value="Flagellin_C_sub2"/>
</dbReference>
<dbReference type="InterPro" id="IPR001029">
    <property type="entry name" value="Flagellin_N"/>
</dbReference>
<dbReference type="PANTHER" id="PTHR42792">
    <property type="entry name" value="FLAGELLIN"/>
    <property type="match status" value="1"/>
</dbReference>
<dbReference type="PANTHER" id="PTHR42792:SF2">
    <property type="entry name" value="FLAGELLIN"/>
    <property type="match status" value="1"/>
</dbReference>
<dbReference type="Pfam" id="PF00700">
    <property type="entry name" value="Flagellin_C"/>
    <property type="match status" value="1"/>
</dbReference>
<dbReference type="Pfam" id="PF00669">
    <property type="entry name" value="Flagellin_N"/>
    <property type="match status" value="1"/>
</dbReference>
<dbReference type="PRINTS" id="PR00207">
    <property type="entry name" value="FLAGELLIN"/>
</dbReference>
<dbReference type="SUPFAM" id="SSF64518">
    <property type="entry name" value="Phase 1 flagellin"/>
    <property type="match status" value="1"/>
</dbReference>
<comment type="function">
    <text>Flagellin is the subunit protein which polymerizes to form the filaments of bacterial flagella.</text>
</comment>
<comment type="interaction">
    <interactant intactId="EBI-16077660">
        <id>P21184</id>
    </interactant>
    <interactant intactId="EBI-617138">
        <id>Q94F62</id>
        <label>BAK1</label>
    </interactant>
    <organismsDiffer>true</organismsDiffer>
    <experiments>5</experiments>
</comment>
<comment type="interaction">
    <interactant intactId="EBI-16077660">
        <id>P21184</id>
    </interactant>
    <interactant intactId="EBI-1799448">
        <id>Q9FL28</id>
        <label>FLS2</label>
    </interactant>
    <organismsDiffer>true</organismsDiffer>
    <experiments>5</experiments>
</comment>
<comment type="subcellular location">
    <subcellularLocation>
        <location>Secreted</location>
    </subcellularLocation>
    <subcellularLocation>
        <location>Bacterial flagellum</location>
    </subcellularLocation>
</comment>
<comment type="PTM">
    <text evidence="2">Phosphorylated on tyrosine residue(s).</text>
</comment>
<comment type="PTM">
    <text evidence="3">Flagellin from strain 5939 but not from strain 170018 is glycosylated.</text>
</comment>
<comment type="similarity">
    <text evidence="4">Belongs to the bacterial flagellin family.</text>
</comment>
<protein>
    <recommendedName>
        <fullName>A-type flagellin</fullName>
    </recommendedName>
</protein>
<feature type="initiator methionine" description="Removed" evidence="1">
    <location>
        <position position="1"/>
    </location>
</feature>
<feature type="chain" id="PRO_0000182619" description="A-type flagellin">
    <location>
        <begin position="2"/>
        <end position="394"/>
    </location>
</feature>
<feature type="sequence variant" description="In strain: PAK.">
    <original>V</original>
    <variation>A</variation>
    <location>
        <position position="116"/>
    </location>
</feature>
<feature type="sequence variant" description="In strain: PAK and 170018.">
    <original>T</original>
    <variation>A</variation>
    <location>
        <position position="280"/>
    </location>
</feature>
<feature type="sequence variant" description="In strain: 5939.">
    <original>F</original>
    <variation>I</variation>
    <location>
        <position position="332"/>
    </location>
</feature>
<feature type="sequence conflict" description="In Ref. 1; AAA63458." evidence="4" ref="1">
    <original>GAQSAVLVIDE</original>
    <variation>ALSRRAGDRTT</variation>
    <location>
        <begin position="303"/>
        <end position="313"/>
    </location>
</feature>
<feature type="sequence conflict" description="In Ref. 1; AAA63458." evidence="4" ref="1">
    <original>QRADLG</original>
    <variation>SVPTSV</variation>
    <location>
        <begin position="321"/>
        <end position="326"/>
    </location>
</feature>
<keyword id="KW-0975">Bacterial flagellum</keyword>
<keyword id="KW-0903">Direct protein sequencing</keyword>
<keyword id="KW-0325">Glycoprotein</keyword>
<keyword id="KW-0597">Phosphoprotein</keyword>
<keyword id="KW-0964">Secreted</keyword>
<evidence type="ECO:0000269" key="1">
    <source>
    </source>
</evidence>
<evidence type="ECO:0000269" key="2">
    <source>
    </source>
</evidence>
<evidence type="ECO:0000269" key="3">
    <source>
    </source>
</evidence>
<evidence type="ECO:0000305" key="4"/>
<organism>
    <name type="scientific">Pseudomonas aeruginosa</name>
    <dbReference type="NCBI Taxonomy" id="287"/>
    <lineage>
        <taxon>Bacteria</taxon>
        <taxon>Pseudomonadati</taxon>
        <taxon>Pseudomonadota</taxon>
        <taxon>Gammaproteobacteria</taxon>
        <taxon>Pseudomonadales</taxon>
        <taxon>Pseudomonadaceae</taxon>
        <taxon>Pseudomonas</taxon>
    </lineage>
</organism>
<gene>
    <name type="primary">fliC</name>
    <name type="synonym">flaA</name>
</gene>
<reference key="1">
    <citation type="journal article" date="1990" name="J. Bacteriol.">
        <title>Characterization of the type a flagellin gene from Pseudomonas aeruginosa PAK.</title>
        <authorList>
            <person name="Totten P.A."/>
            <person name="Lory S."/>
        </authorList>
    </citation>
    <scope>NUCLEOTIDE SEQUENCE [GENOMIC DNA]</scope>
    <scope>PROTEIN SEQUENCE OF 2-6</scope>
    <source>
        <strain>PAK</strain>
    </source>
</reference>
<reference key="2">
    <citation type="journal article" date="1998" name="J. Gen. Appl. Microbiol.">
        <title>PCR-based method for isolation of the flagellin genes from Pseudomonas species.</title>
        <authorList>
            <person name="Tungpradabkul S."/>
            <person name="Senapin S."/>
            <person name="Panyim S."/>
        </authorList>
    </citation>
    <scope>NUCLEOTIDE SEQUENCE [GENOMIC DNA] OF 1-390</scope>
    <source>
        <strain>ATCC 27853 / DSM 1117 / CIP 76.110 / JCM 6119 / LMG 6395 / NCIMB 12469</strain>
    </source>
</reference>
<reference key="3">
    <citation type="journal article" date="1998" name="J. Bacteriol.">
        <title>Cloning and comparison of fliC genes and identification of glycosylation in the flagellin of Pseudomonas aeruginosa a-type strains.</title>
        <authorList>
            <person name="Brimer C.D."/>
            <person name="Montie T.C."/>
        </authorList>
    </citation>
    <scope>NUCLEOTIDE SEQUENCE [GENOMIC DNA] OF 47-386</scope>
    <scope>GLYCOSYLATION</scope>
    <source>
        <strain>170018</strain>
        <strain>5939</strain>
    </source>
</reference>
<reference key="4">
    <citation type="journal article" date="1993" name="J. Bacteriol.">
        <title>Tyrosine phosphate in a- and b-type flagellins of Pseudomonas aeruginosa.</title>
        <authorList>
            <person name="Kelly-Wintenberg K."/>
            <person name="South S.L."/>
            <person name="Montie T.C."/>
        </authorList>
    </citation>
    <scope>PHOSPHORYLATION</scope>
    <source>
        <strain>170018</strain>
        <strain>2993</strain>
        <strain>5940</strain>
        <strain>PAK</strain>
    </source>
</reference>
<sequence>MALTVNTNIASLNTQRNLNNSSASLNTSLQRLSTGSRINSAKDDAAGLQIANRLTSQVNGLNVATKNANDGISLAQTAEGALQQSTNILQRMRDLSLQSANGSNSDSERTALNGEVKQLQKELDRISNTTTFGGRKLLDGSFGVASFQVGSAANEIISVGIDEMSAESLNGTYFKADGGGAVTAATASGTVDIAIGITGGSAVNVKVDMKGNETAEQAAAKIAAAVNDANVGIGAFSDGDTISYVSKAGKDGSGAITSAVSGVVIADTGSTGVGTAAGVTPSATAFAKTNDTVAKIDISTAKGAQSAVLVIDEAIKQIDAQRADLGAVQNRFDNTINNLKNIGENVSAARGRIEDTDFAAETANLTKNQVLQQAGTAILAQANQLPQSVLSLLR</sequence>
<accession>P21184</accession>
<accession>O30388</accession>
<accession>O33928</accession>
<accession>O68382</accession>
<proteinExistence type="evidence at protein level"/>
<name>FLICA_PSEAI</name>